<keyword id="KW-0028">Amino-acid biosynthesis</keyword>
<keyword id="KW-0057">Aromatic amino acid biosynthesis</keyword>
<keyword id="KW-0521">NADP</keyword>
<keyword id="KW-0560">Oxidoreductase</keyword>
<reference key="1">
    <citation type="journal article" date="2007" name="PLoS Genet.">
        <title>Patterns and implications of gene gain and loss in the evolution of Prochlorococcus.</title>
        <authorList>
            <person name="Kettler G.C."/>
            <person name="Martiny A.C."/>
            <person name="Huang K."/>
            <person name="Zucker J."/>
            <person name="Coleman M.L."/>
            <person name="Rodrigue S."/>
            <person name="Chen F."/>
            <person name="Lapidus A."/>
            <person name="Ferriera S."/>
            <person name="Johnson J."/>
            <person name="Steglich C."/>
            <person name="Church G.M."/>
            <person name="Richardson P."/>
            <person name="Chisholm S.W."/>
        </authorList>
    </citation>
    <scope>NUCLEOTIDE SEQUENCE [LARGE SCALE GENOMIC DNA]</scope>
    <source>
        <strain>AS9601</strain>
    </source>
</reference>
<sequence>MISSKTSFIALIGNPVSHSLSPIMQNAALQYLGLDLIYIAVPCKDEDLELVLNSFKKINCKGLNITIPHKEKVLTLCSEISPIANKLKAINTLKLNSEKKWSATNTDVEGFIYPLKNLNLAKKKSIVLGSGGAARSVIQGLINLNLSTISVISRNKSSLDELIKNFGNEIQLQGLLNSDDQAQVLIREADLIVNTTPAGMKTTKYKNNVMPYGETFWRSLNSQTIVYDLIYNPAPTTLLKFSARKGCKTIDGLEMLVAQGIKSLSFWTDGLEVPFHVMNDALKKYL</sequence>
<accession>A2BTT7</accession>
<organism>
    <name type="scientific">Prochlorococcus marinus (strain AS9601)</name>
    <dbReference type="NCBI Taxonomy" id="146891"/>
    <lineage>
        <taxon>Bacteria</taxon>
        <taxon>Bacillati</taxon>
        <taxon>Cyanobacteriota</taxon>
        <taxon>Cyanophyceae</taxon>
        <taxon>Synechococcales</taxon>
        <taxon>Prochlorococcaceae</taxon>
        <taxon>Prochlorococcus</taxon>
    </lineage>
</organism>
<comment type="function">
    <text evidence="1">Involved in the biosynthesis of the chorismate, which leads to the biosynthesis of aromatic amino acids. Catalyzes the reversible NADPH linked reduction of 3-dehydroshikimate (DHSA) to yield shikimate (SA).</text>
</comment>
<comment type="catalytic activity">
    <reaction evidence="1">
        <text>shikimate + NADP(+) = 3-dehydroshikimate + NADPH + H(+)</text>
        <dbReference type="Rhea" id="RHEA:17737"/>
        <dbReference type="ChEBI" id="CHEBI:15378"/>
        <dbReference type="ChEBI" id="CHEBI:16630"/>
        <dbReference type="ChEBI" id="CHEBI:36208"/>
        <dbReference type="ChEBI" id="CHEBI:57783"/>
        <dbReference type="ChEBI" id="CHEBI:58349"/>
        <dbReference type="EC" id="1.1.1.25"/>
    </reaction>
</comment>
<comment type="pathway">
    <text evidence="1">Metabolic intermediate biosynthesis; chorismate biosynthesis; chorismate from D-erythrose 4-phosphate and phosphoenolpyruvate: step 4/7.</text>
</comment>
<comment type="subunit">
    <text evidence="1">Homodimer.</text>
</comment>
<comment type="similarity">
    <text evidence="1">Belongs to the shikimate dehydrogenase family.</text>
</comment>
<protein>
    <recommendedName>
        <fullName evidence="1">Shikimate dehydrogenase (NADP(+))</fullName>
        <shortName evidence="1">SDH</shortName>
        <ecNumber evidence="1">1.1.1.25</ecNumber>
    </recommendedName>
</protein>
<evidence type="ECO:0000255" key="1">
    <source>
        <dbReference type="HAMAP-Rule" id="MF_00222"/>
    </source>
</evidence>
<dbReference type="EC" id="1.1.1.25" evidence="1"/>
<dbReference type="EMBL" id="CP000551">
    <property type="protein sequence ID" value="ABM71198.1"/>
    <property type="molecule type" value="Genomic_DNA"/>
</dbReference>
<dbReference type="RefSeq" id="WP_011819315.1">
    <property type="nucleotide sequence ID" value="NC_008816.1"/>
</dbReference>
<dbReference type="SMR" id="A2BTT7"/>
<dbReference type="STRING" id="146891.A9601_19151"/>
<dbReference type="KEGG" id="pmb:A9601_19151"/>
<dbReference type="eggNOG" id="COG0169">
    <property type="taxonomic scope" value="Bacteria"/>
</dbReference>
<dbReference type="HOGENOM" id="CLU_044063_4_1_3"/>
<dbReference type="OrthoDB" id="9792692at2"/>
<dbReference type="UniPathway" id="UPA00053">
    <property type="reaction ID" value="UER00087"/>
</dbReference>
<dbReference type="Proteomes" id="UP000002590">
    <property type="component" value="Chromosome"/>
</dbReference>
<dbReference type="GO" id="GO:0005829">
    <property type="term" value="C:cytosol"/>
    <property type="evidence" value="ECO:0007669"/>
    <property type="project" value="TreeGrafter"/>
</dbReference>
<dbReference type="GO" id="GO:0050661">
    <property type="term" value="F:NADP binding"/>
    <property type="evidence" value="ECO:0007669"/>
    <property type="project" value="InterPro"/>
</dbReference>
<dbReference type="GO" id="GO:0004764">
    <property type="term" value="F:shikimate 3-dehydrogenase (NADP+) activity"/>
    <property type="evidence" value="ECO:0007669"/>
    <property type="project" value="UniProtKB-UniRule"/>
</dbReference>
<dbReference type="GO" id="GO:0008652">
    <property type="term" value="P:amino acid biosynthetic process"/>
    <property type="evidence" value="ECO:0007669"/>
    <property type="project" value="UniProtKB-KW"/>
</dbReference>
<dbReference type="GO" id="GO:0009073">
    <property type="term" value="P:aromatic amino acid family biosynthetic process"/>
    <property type="evidence" value="ECO:0007669"/>
    <property type="project" value="UniProtKB-KW"/>
</dbReference>
<dbReference type="GO" id="GO:0009423">
    <property type="term" value="P:chorismate biosynthetic process"/>
    <property type="evidence" value="ECO:0007669"/>
    <property type="project" value="UniProtKB-UniRule"/>
</dbReference>
<dbReference type="GO" id="GO:0019632">
    <property type="term" value="P:shikimate metabolic process"/>
    <property type="evidence" value="ECO:0007669"/>
    <property type="project" value="InterPro"/>
</dbReference>
<dbReference type="CDD" id="cd01065">
    <property type="entry name" value="NAD_bind_Shikimate_DH"/>
    <property type="match status" value="1"/>
</dbReference>
<dbReference type="Gene3D" id="3.40.50.10860">
    <property type="entry name" value="Leucine Dehydrogenase, chain A, domain 1"/>
    <property type="match status" value="1"/>
</dbReference>
<dbReference type="Gene3D" id="3.40.50.720">
    <property type="entry name" value="NAD(P)-binding Rossmann-like Domain"/>
    <property type="match status" value="1"/>
</dbReference>
<dbReference type="HAMAP" id="MF_00222">
    <property type="entry name" value="Shikimate_DH_AroE"/>
    <property type="match status" value="1"/>
</dbReference>
<dbReference type="InterPro" id="IPR046346">
    <property type="entry name" value="Aminoacid_DH-like_N_sf"/>
</dbReference>
<dbReference type="InterPro" id="IPR036291">
    <property type="entry name" value="NAD(P)-bd_dom_sf"/>
</dbReference>
<dbReference type="InterPro" id="IPR041121">
    <property type="entry name" value="SDH_C"/>
</dbReference>
<dbReference type="InterPro" id="IPR011342">
    <property type="entry name" value="Shikimate_DH"/>
</dbReference>
<dbReference type="InterPro" id="IPR013708">
    <property type="entry name" value="Shikimate_DH-bd_N"/>
</dbReference>
<dbReference type="InterPro" id="IPR022893">
    <property type="entry name" value="Shikimate_DH_fam"/>
</dbReference>
<dbReference type="InterPro" id="IPR006151">
    <property type="entry name" value="Shikm_DH/Glu-tRNA_Rdtase"/>
</dbReference>
<dbReference type="NCBIfam" id="TIGR00507">
    <property type="entry name" value="aroE"/>
    <property type="match status" value="1"/>
</dbReference>
<dbReference type="NCBIfam" id="NF001314">
    <property type="entry name" value="PRK00258.2-2"/>
    <property type="match status" value="1"/>
</dbReference>
<dbReference type="PANTHER" id="PTHR21089:SF1">
    <property type="entry name" value="BIFUNCTIONAL 3-DEHYDROQUINATE DEHYDRATASE_SHIKIMATE DEHYDROGENASE, CHLOROPLASTIC"/>
    <property type="match status" value="1"/>
</dbReference>
<dbReference type="PANTHER" id="PTHR21089">
    <property type="entry name" value="SHIKIMATE DEHYDROGENASE"/>
    <property type="match status" value="1"/>
</dbReference>
<dbReference type="Pfam" id="PF18317">
    <property type="entry name" value="SDH_C"/>
    <property type="match status" value="1"/>
</dbReference>
<dbReference type="Pfam" id="PF01488">
    <property type="entry name" value="Shikimate_DH"/>
    <property type="match status" value="1"/>
</dbReference>
<dbReference type="Pfam" id="PF08501">
    <property type="entry name" value="Shikimate_dh_N"/>
    <property type="match status" value="1"/>
</dbReference>
<dbReference type="SUPFAM" id="SSF53223">
    <property type="entry name" value="Aminoacid dehydrogenase-like, N-terminal domain"/>
    <property type="match status" value="1"/>
</dbReference>
<dbReference type="SUPFAM" id="SSF51735">
    <property type="entry name" value="NAD(P)-binding Rossmann-fold domains"/>
    <property type="match status" value="1"/>
</dbReference>
<name>AROE_PROMS</name>
<feature type="chain" id="PRO_0000325145" description="Shikimate dehydrogenase (NADP(+))">
    <location>
        <begin position="1"/>
        <end position="286"/>
    </location>
</feature>
<feature type="active site" description="Proton acceptor" evidence="1">
    <location>
        <position position="70"/>
    </location>
</feature>
<feature type="binding site" evidence="1">
    <location>
        <begin position="19"/>
        <end position="21"/>
    </location>
    <ligand>
        <name>shikimate</name>
        <dbReference type="ChEBI" id="CHEBI:36208"/>
    </ligand>
</feature>
<feature type="binding site" evidence="1">
    <location>
        <position position="66"/>
    </location>
    <ligand>
        <name>shikimate</name>
        <dbReference type="ChEBI" id="CHEBI:36208"/>
    </ligand>
</feature>
<feature type="binding site" evidence="1">
    <location>
        <position position="91"/>
    </location>
    <ligand>
        <name>shikimate</name>
        <dbReference type="ChEBI" id="CHEBI:36208"/>
    </ligand>
</feature>
<feature type="binding site" evidence="1">
    <location>
        <position position="107"/>
    </location>
    <ligand>
        <name>shikimate</name>
        <dbReference type="ChEBI" id="CHEBI:36208"/>
    </ligand>
</feature>
<feature type="binding site" evidence="1">
    <location>
        <begin position="129"/>
        <end position="133"/>
    </location>
    <ligand>
        <name>NADP(+)</name>
        <dbReference type="ChEBI" id="CHEBI:58349"/>
    </ligand>
</feature>
<feature type="binding site" evidence="1">
    <location>
        <position position="229"/>
    </location>
    <ligand>
        <name>NADP(+)</name>
        <dbReference type="ChEBI" id="CHEBI:58349"/>
    </ligand>
</feature>
<feature type="binding site" evidence="1">
    <location>
        <position position="231"/>
    </location>
    <ligand>
        <name>shikimate</name>
        <dbReference type="ChEBI" id="CHEBI:36208"/>
    </ligand>
</feature>
<feature type="binding site" evidence="1">
    <location>
        <position position="252"/>
    </location>
    <ligand>
        <name>NADP(+)</name>
        <dbReference type="ChEBI" id="CHEBI:58349"/>
    </ligand>
</feature>
<gene>
    <name evidence="1" type="primary">aroE</name>
    <name type="ordered locus">A9601_19151</name>
</gene>
<proteinExistence type="inferred from homology"/>